<reference key="1">
    <citation type="journal article" date="1998" name="Science">
        <title>Genome sequence of the nematode C. elegans: a platform for investigating biology.</title>
        <authorList>
            <consortium name="The C. elegans sequencing consortium"/>
        </authorList>
    </citation>
    <scope>NUCLEOTIDE SEQUENCE [LARGE SCALE GENOMIC DNA]</scope>
    <source>
        <strain>Bristol N2</strain>
    </source>
</reference>
<evidence type="ECO:0000255" key="1"/>
<gene>
    <name type="ORF">C05B5.1</name>
</gene>
<protein>
    <recommendedName>
        <fullName>Uncharacterized protein C05B5.1</fullName>
    </recommendedName>
</protein>
<accession>P34289</accession>
<feature type="signal peptide" evidence="1">
    <location>
        <begin position="1"/>
        <end position="20"/>
    </location>
</feature>
<feature type="chain" id="PRO_0000065138" description="Uncharacterized protein C05B5.1">
    <location>
        <begin position="21"/>
        <end position="145"/>
    </location>
</feature>
<dbReference type="EMBL" id="Z32679">
    <property type="protein sequence ID" value="CAA83590.2"/>
    <property type="molecule type" value="Genomic_DNA"/>
</dbReference>
<dbReference type="PIR" id="S43575">
    <property type="entry name" value="S43575"/>
</dbReference>
<dbReference type="RefSeq" id="NP_499215.2">
    <property type="nucleotide sequence ID" value="NM_066814.5"/>
</dbReference>
<dbReference type="FunCoup" id="P34289">
    <property type="interactions" value="227"/>
</dbReference>
<dbReference type="PaxDb" id="6239-C05B5.1"/>
<dbReference type="EnsemblMetazoa" id="C05B5.1.1">
    <property type="protein sequence ID" value="C05B5.1.1"/>
    <property type="gene ID" value="WBGene00007319"/>
</dbReference>
<dbReference type="GeneID" id="182245"/>
<dbReference type="KEGG" id="cel:CELE_C05B5.1"/>
<dbReference type="UCSC" id="C05B5.1">
    <property type="organism name" value="c. elegans"/>
</dbReference>
<dbReference type="AGR" id="WB:WBGene00007319"/>
<dbReference type="CTD" id="182245"/>
<dbReference type="WormBase" id="C05B5.1">
    <property type="protein sequence ID" value="CE00047"/>
    <property type="gene ID" value="WBGene00007319"/>
</dbReference>
<dbReference type="eggNOG" id="ENOG502TD92">
    <property type="taxonomic scope" value="Eukaryota"/>
</dbReference>
<dbReference type="HOGENOM" id="CLU_1798254_0_0_1"/>
<dbReference type="InParanoid" id="P34289"/>
<dbReference type="OMA" id="FMMANTE"/>
<dbReference type="OrthoDB" id="5815598at2759"/>
<dbReference type="PRO" id="PR:P34289"/>
<dbReference type="Proteomes" id="UP000001940">
    <property type="component" value="Chromosome III"/>
</dbReference>
<dbReference type="Bgee" id="WBGene00007319">
    <property type="expression patterns" value="Expressed in adult organism and 1 other cell type or tissue"/>
</dbReference>
<proteinExistence type="inferred from homology"/>
<name>YKO1_CAEEL</name>
<organism>
    <name type="scientific">Caenorhabditis elegans</name>
    <dbReference type="NCBI Taxonomy" id="6239"/>
    <lineage>
        <taxon>Eukaryota</taxon>
        <taxon>Metazoa</taxon>
        <taxon>Ecdysozoa</taxon>
        <taxon>Nematoda</taxon>
        <taxon>Chromadorea</taxon>
        <taxon>Rhabditida</taxon>
        <taxon>Rhabditina</taxon>
        <taxon>Rhabditomorpha</taxon>
        <taxon>Rhabditoidea</taxon>
        <taxon>Rhabditidae</taxon>
        <taxon>Peloderinae</taxon>
        <taxon>Caenorhabditis</taxon>
    </lineage>
</organism>
<sequence>MPSKVCTLILLFSVINQMKCGSTTDCAMRVFKETIKEMSEVADLQLETLQNLSPDTKRQMKIAIMDVLTSMGLFLEMSTASSFSFATLPIYMLRAQNLMNLLSMDLENLQPEQGTLSESVEKMKNMLISVVNTLPKKAMICFQME</sequence>
<keyword id="KW-1185">Reference proteome</keyword>
<keyword id="KW-0732">Signal</keyword>